<name>RNH2_XANAC</name>
<dbReference type="EC" id="3.1.26.4" evidence="1"/>
<dbReference type="EMBL" id="AE008923">
    <property type="protein sequence ID" value="AAM36278.1"/>
    <property type="molecule type" value="Genomic_DNA"/>
</dbReference>
<dbReference type="RefSeq" id="WP_011050896.1">
    <property type="nucleotide sequence ID" value="NC_003919.1"/>
</dbReference>
<dbReference type="SMR" id="Q8PML9"/>
<dbReference type="KEGG" id="xac:XAC1407"/>
<dbReference type="eggNOG" id="COG0164">
    <property type="taxonomic scope" value="Bacteria"/>
</dbReference>
<dbReference type="HOGENOM" id="CLU_036532_3_2_6"/>
<dbReference type="Proteomes" id="UP000000576">
    <property type="component" value="Chromosome"/>
</dbReference>
<dbReference type="GO" id="GO:0005737">
    <property type="term" value="C:cytoplasm"/>
    <property type="evidence" value="ECO:0007669"/>
    <property type="project" value="UniProtKB-SubCell"/>
</dbReference>
<dbReference type="GO" id="GO:0032299">
    <property type="term" value="C:ribonuclease H2 complex"/>
    <property type="evidence" value="ECO:0007669"/>
    <property type="project" value="TreeGrafter"/>
</dbReference>
<dbReference type="GO" id="GO:0030145">
    <property type="term" value="F:manganese ion binding"/>
    <property type="evidence" value="ECO:0007669"/>
    <property type="project" value="UniProtKB-UniRule"/>
</dbReference>
<dbReference type="GO" id="GO:0003723">
    <property type="term" value="F:RNA binding"/>
    <property type="evidence" value="ECO:0007669"/>
    <property type="project" value="InterPro"/>
</dbReference>
<dbReference type="GO" id="GO:0004523">
    <property type="term" value="F:RNA-DNA hybrid ribonuclease activity"/>
    <property type="evidence" value="ECO:0007669"/>
    <property type="project" value="UniProtKB-UniRule"/>
</dbReference>
<dbReference type="GO" id="GO:0043137">
    <property type="term" value="P:DNA replication, removal of RNA primer"/>
    <property type="evidence" value="ECO:0007669"/>
    <property type="project" value="TreeGrafter"/>
</dbReference>
<dbReference type="GO" id="GO:0006298">
    <property type="term" value="P:mismatch repair"/>
    <property type="evidence" value="ECO:0007669"/>
    <property type="project" value="TreeGrafter"/>
</dbReference>
<dbReference type="CDD" id="cd07182">
    <property type="entry name" value="RNase_HII_bacteria_HII_like"/>
    <property type="match status" value="1"/>
</dbReference>
<dbReference type="FunFam" id="3.30.420.10:FF:000142">
    <property type="entry name" value="Ribonuclease HII"/>
    <property type="match status" value="1"/>
</dbReference>
<dbReference type="Gene3D" id="3.30.420.10">
    <property type="entry name" value="Ribonuclease H-like superfamily/Ribonuclease H"/>
    <property type="match status" value="1"/>
</dbReference>
<dbReference type="HAMAP" id="MF_00052_B">
    <property type="entry name" value="RNase_HII_B"/>
    <property type="match status" value="1"/>
</dbReference>
<dbReference type="InterPro" id="IPR022898">
    <property type="entry name" value="RNase_HII"/>
</dbReference>
<dbReference type="InterPro" id="IPR001352">
    <property type="entry name" value="RNase_HII/HIII"/>
</dbReference>
<dbReference type="InterPro" id="IPR024567">
    <property type="entry name" value="RNase_HII/HIII_dom"/>
</dbReference>
<dbReference type="InterPro" id="IPR012337">
    <property type="entry name" value="RNaseH-like_sf"/>
</dbReference>
<dbReference type="InterPro" id="IPR036397">
    <property type="entry name" value="RNaseH_sf"/>
</dbReference>
<dbReference type="NCBIfam" id="NF000595">
    <property type="entry name" value="PRK00015.1-3"/>
    <property type="match status" value="1"/>
</dbReference>
<dbReference type="PANTHER" id="PTHR10954">
    <property type="entry name" value="RIBONUCLEASE H2 SUBUNIT A"/>
    <property type="match status" value="1"/>
</dbReference>
<dbReference type="PANTHER" id="PTHR10954:SF18">
    <property type="entry name" value="RIBONUCLEASE HII"/>
    <property type="match status" value="1"/>
</dbReference>
<dbReference type="Pfam" id="PF01351">
    <property type="entry name" value="RNase_HII"/>
    <property type="match status" value="1"/>
</dbReference>
<dbReference type="SUPFAM" id="SSF53098">
    <property type="entry name" value="Ribonuclease H-like"/>
    <property type="match status" value="1"/>
</dbReference>
<dbReference type="PROSITE" id="PS51975">
    <property type="entry name" value="RNASE_H_2"/>
    <property type="match status" value="1"/>
</dbReference>
<evidence type="ECO:0000255" key="1">
    <source>
        <dbReference type="HAMAP-Rule" id="MF_00052"/>
    </source>
</evidence>
<evidence type="ECO:0000255" key="2">
    <source>
        <dbReference type="PROSITE-ProRule" id="PRU01319"/>
    </source>
</evidence>
<proteinExistence type="inferred from homology"/>
<protein>
    <recommendedName>
        <fullName evidence="1">Ribonuclease HII</fullName>
        <shortName evidence="1">RNase HII</shortName>
        <ecNumber evidence="1">3.1.26.4</ecNumber>
    </recommendedName>
</protein>
<feature type="chain" id="PRO_0000111654" description="Ribonuclease HII">
    <location>
        <begin position="1"/>
        <end position="244"/>
    </location>
</feature>
<feature type="domain" description="RNase H type-2" evidence="2">
    <location>
        <begin position="31"/>
        <end position="222"/>
    </location>
</feature>
<feature type="binding site" evidence="1">
    <location>
        <position position="37"/>
    </location>
    <ligand>
        <name>a divalent metal cation</name>
        <dbReference type="ChEBI" id="CHEBI:60240"/>
    </ligand>
</feature>
<feature type="binding site" evidence="1">
    <location>
        <position position="38"/>
    </location>
    <ligand>
        <name>a divalent metal cation</name>
        <dbReference type="ChEBI" id="CHEBI:60240"/>
    </ligand>
</feature>
<feature type="binding site" evidence="1">
    <location>
        <position position="130"/>
    </location>
    <ligand>
        <name>a divalent metal cation</name>
        <dbReference type="ChEBI" id="CHEBI:60240"/>
    </ligand>
</feature>
<reference key="1">
    <citation type="journal article" date="2002" name="Nature">
        <title>Comparison of the genomes of two Xanthomonas pathogens with differing host specificities.</title>
        <authorList>
            <person name="da Silva A.C.R."/>
            <person name="Ferro J.A."/>
            <person name="Reinach F.C."/>
            <person name="Farah C.S."/>
            <person name="Furlan L.R."/>
            <person name="Quaggio R.B."/>
            <person name="Monteiro-Vitorello C.B."/>
            <person name="Van Sluys M.A."/>
            <person name="Almeida N.F. Jr."/>
            <person name="Alves L.M.C."/>
            <person name="do Amaral A.M."/>
            <person name="Bertolini M.C."/>
            <person name="Camargo L.E.A."/>
            <person name="Camarotte G."/>
            <person name="Cannavan F."/>
            <person name="Cardozo J."/>
            <person name="Chambergo F."/>
            <person name="Ciapina L.P."/>
            <person name="Cicarelli R.M.B."/>
            <person name="Coutinho L.L."/>
            <person name="Cursino-Santos J.R."/>
            <person name="El-Dorry H."/>
            <person name="Faria J.B."/>
            <person name="Ferreira A.J.S."/>
            <person name="Ferreira R.C.C."/>
            <person name="Ferro M.I.T."/>
            <person name="Formighieri E.F."/>
            <person name="Franco M.C."/>
            <person name="Greggio C.C."/>
            <person name="Gruber A."/>
            <person name="Katsuyama A.M."/>
            <person name="Kishi L.T."/>
            <person name="Leite R.P."/>
            <person name="Lemos E.G.M."/>
            <person name="Lemos M.V.F."/>
            <person name="Locali E.C."/>
            <person name="Machado M.A."/>
            <person name="Madeira A.M.B.N."/>
            <person name="Martinez-Rossi N.M."/>
            <person name="Martins E.C."/>
            <person name="Meidanis J."/>
            <person name="Menck C.F.M."/>
            <person name="Miyaki C.Y."/>
            <person name="Moon D.H."/>
            <person name="Moreira L.M."/>
            <person name="Novo M.T.M."/>
            <person name="Okura V.K."/>
            <person name="Oliveira M.C."/>
            <person name="Oliveira V.R."/>
            <person name="Pereira H.A."/>
            <person name="Rossi A."/>
            <person name="Sena J.A.D."/>
            <person name="Silva C."/>
            <person name="de Souza R.F."/>
            <person name="Spinola L.A.F."/>
            <person name="Takita M.A."/>
            <person name="Tamura R.E."/>
            <person name="Teixeira E.C."/>
            <person name="Tezza R.I.D."/>
            <person name="Trindade dos Santos M."/>
            <person name="Truffi D."/>
            <person name="Tsai S.M."/>
            <person name="White F.F."/>
            <person name="Setubal J.C."/>
            <person name="Kitajima J.P."/>
        </authorList>
    </citation>
    <scope>NUCLEOTIDE SEQUENCE [LARGE SCALE GENOMIC DNA]</scope>
    <source>
        <strain>306</strain>
    </source>
</reference>
<organism>
    <name type="scientific">Xanthomonas axonopodis pv. citri (strain 306)</name>
    <dbReference type="NCBI Taxonomy" id="190486"/>
    <lineage>
        <taxon>Bacteria</taxon>
        <taxon>Pseudomonadati</taxon>
        <taxon>Pseudomonadota</taxon>
        <taxon>Gammaproteobacteria</taxon>
        <taxon>Lysobacterales</taxon>
        <taxon>Lysobacteraceae</taxon>
        <taxon>Xanthomonas</taxon>
    </lineage>
</organism>
<gene>
    <name evidence="1" type="primary">rnhB</name>
    <name type="ordered locus">XAC1407</name>
</gene>
<comment type="function">
    <text evidence="1">Endonuclease that specifically degrades the RNA of RNA-DNA hybrids.</text>
</comment>
<comment type="catalytic activity">
    <reaction evidence="1">
        <text>Endonucleolytic cleavage to 5'-phosphomonoester.</text>
        <dbReference type="EC" id="3.1.26.4"/>
    </reaction>
</comment>
<comment type="cofactor">
    <cofactor evidence="1">
        <name>Mn(2+)</name>
        <dbReference type="ChEBI" id="CHEBI:29035"/>
    </cofactor>
    <cofactor evidence="1">
        <name>Mg(2+)</name>
        <dbReference type="ChEBI" id="CHEBI:18420"/>
    </cofactor>
    <text evidence="1">Manganese or magnesium. Binds 1 divalent metal ion per monomer in the absence of substrate. May bind a second metal ion after substrate binding.</text>
</comment>
<comment type="subcellular location">
    <subcellularLocation>
        <location evidence="1">Cytoplasm</location>
    </subcellularLocation>
</comment>
<comment type="similarity">
    <text evidence="1">Belongs to the RNase HII family.</text>
</comment>
<keyword id="KW-0963">Cytoplasm</keyword>
<keyword id="KW-0255">Endonuclease</keyword>
<keyword id="KW-0378">Hydrolase</keyword>
<keyword id="KW-0464">Manganese</keyword>
<keyword id="KW-0479">Metal-binding</keyword>
<keyword id="KW-0540">Nuclease</keyword>
<sequence>MRRSTSNGAVVVPATQDGLFHDSPFPIPDSRLIAGVDEAGRGPLAGPVAVAAVVFDPGKPRINGLDDSKQLTAERREQLYARIVDRALAWSVVLIDSEEIDRINIYQATMLGMRRAVEGVAHVAGFARIDGNRVPKGLPCPAEALIGGDALDRAIMAASIVAKVTRDRLMHELHTRHPEYRFDQHKGYSTPVHLAALQTHGPCPQHRRSFAPVRLALQGREGLEPDPGTRDLEQLQVGQLVAPL</sequence>
<accession>Q8PML9</accession>